<comment type="function">
    <text evidence="1">Binds directly to 16S ribosomal RNA.</text>
</comment>
<comment type="similarity">
    <text evidence="1">Belongs to the bacterial ribosomal protein bS20 family.</text>
</comment>
<proteinExistence type="inferred from homology"/>
<feature type="chain" id="PRO_1000081440" description="Small ribosomal subunit protein bS20">
    <location>
        <begin position="1"/>
        <end position="100"/>
    </location>
</feature>
<feature type="region of interest" description="Disordered" evidence="2">
    <location>
        <begin position="1"/>
        <end position="26"/>
    </location>
</feature>
<feature type="compositionally biased region" description="Basic and acidic residues" evidence="2">
    <location>
        <begin position="1"/>
        <end position="18"/>
    </location>
</feature>
<organism>
    <name type="scientific">Petrotoga mobilis (strain DSM 10674 / SJ95)</name>
    <dbReference type="NCBI Taxonomy" id="403833"/>
    <lineage>
        <taxon>Bacteria</taxon>
        <taxon>Thermotogati</taxon>
        <taxon>Thermotogota</taxon>
        <taxon>Thermotogae</taxon>
        <taxon>Petrotogales</taxon>
        <taxon>Petrotogaceae</taxon>
        <taxon>Petrotoga</taxon>
    </lineage>
</organism>
<accession>A9BHX3</accession>
<dbReference type="EMBL" id="CP000879">
    <property type="protein sequence ID" value="ABX32088.1"/>
    <property type="molecule type" value="Genomic_DNA"/>
</dbReference>
<dbReference type="RefSeq" id="WP_012209187.1">
    <property type="nucleotide sequence ID" value="NC_010003.1"/>
</dbReference>
<dbReference type="SMR" id="A9BHX3"/>
<dbReference type="STRING" id="403833.Pmob_1384"/>
<dbReference type="KEGG" id="pmo:Pmob_1384"/>
<dbReference type="eggNOG" id="COG0268">
    <property type="taxonomic scope" value="Bacteria"/>
</dbReference>
<dbReference type="HOGENOM" id="CLU_160655_3_1_0"/>
<dbReference type="OrthoDB" id="9808392at2"/>
<dbReference type="Proteomes" id="UP000000789">
    <property type="component" value="Chromosome"/>
</dbReference>
<dbReference type="GO" id="GO:0005829">
    <property type="term" value="C:cytosol"/>
    <property type="evidence" value="ECO:0007669"/>
    <property type="project" value="TreeGrafter"/>
</dbReference>
<dbReference type="GO" id="GO:0015935">
    <property type="term" value="C:small ribosomal subunit"/>
    <property type="evidence" value="ECO:0007669"/>
    <property type="project" value="TreeGrafter"/>
</dbReference>
<dbReference type="GO" id="GO:0070181">
    <property type="term" value="F:small ribosomal subunit rRNA binding"/>
    <property type="evidence" value="ECO:0007669"/>
    <property type="project" value="TreeGrafter"/>
</dbReference>
<dbReference type="GO" id="GO:0003735">
    <property type="term" value="F:structural constituent of ribosome"/>
    <property type="evidence" value="ECO:0007669"/>
    <property type="project" value="InterPro"/>
</dbReference>
<dbReference type="GO" id="GO:0006412">
    <property type="term" value="P:translation"/>
    <property type="evidence" value="ECO:0007669"/>
    <property type="project" value="UniProtKB-UniRule"/>
</dbReference>
<dbReference type="Gene3D" id="1.20.58.110">
    <property type="entry name" value="Ribosomal protein S20"/>
    <property type="match status" value="1"/>
</dbReference>
<dbReference type="HAMAP" id="MF_00500">
    <property type="entry name" value="Ribosomal_bS20"/>
    <property type="match status" value="1"/>
</dbReference>
<dbReference type="InterPro" id="IPR002583">
    <property type="entry name" value="Ribosomal_bS20"/>
</dbReference>
<dbReference type="InterPro" id="IPR036510">
    <property type="entry name" value="Ribosomal_bS20_sf"/>
</dbReference>
<dbReference type="NCBIfam" id="TIGR00029">
    <property type="entry name" value="S20"/>
    <property type="match status" value="1"/>
</dbReference>
<dbReference type="PANTHER" id="PTHR33398">
    <property type="entry name" value="30S RIBOSOMAL PROTEIN S20"/>
    <property type="match status" value="1"/>
</dbReference>
<dbReference type="PANTHER" id="PTHR33398:SF1">
    <property type="entry name" value="SMALL RIBOSOMAL SUBUNIT PROTEIN BS20C"/>
    <property type="match status" value="1"/>
</dbReference>
<dbReference type="Pfam" id="PF01649">
    <property type="entry name" value="Ribosomal_S20p"/>
    <property type="match status" value="1"/>
</dbReference>
<dbReference type="SUPFAM" id="SSF46992">
    <property type="entry name" value="Ribosomal protein S20"/>
    <property type="match status" value="1"/>
</dbReference>
<gene>
    <name evidence="1" type="primary">rpsT</name>
    <name type="ordered locus">Pmob_1384</name>
</gene>
<sequence>MPNKKSAEKRVRQSEQRRQKNRGYQKRIKEISKEIDKKIHENAEREELMQLLSKSFKIIDTAKSHGAVHKNYAARKKSKLHLKVKKYLGEMAPESSPVNE</sequence>
<reference key="1">
    <citation type="submission" date="2007-11" db="EMBL/GenBank/DDBJ databases">
        <title>Complete sequence of Petroga mobilis SJ95.</title>
        <authorList>
            <consortium name="US DOE Joint Genome Institute"/>
            <person name="Copeland A."/>
            <person name="Lucas S."/>
            <person name="Lapidus A."/>
            <person name="Barry K."/>
            <person name="Glavina del Rio T."/>
            <person name="Dalin E."/>
            <person name="Tice H."/>
            <person name="Pitluck S."/>
            <person name="Meincke L."/>
            <person name="Brettin T."/>
            <person name="Bruce D."/>
            <person name="Detter J.C."/>
            <person name="Han C."/>
            <person name="Kuske C.R."/>
            <person name="Schmutz J."/>
            <person name="Larimer F."/>
            <person name="Land M."/>
            <person name="Hauser L."/>
            <person name="Kyrpides N."/>
            <person name="Mikhailova N."/>
            <person name="Noll K."/>
            <person name="Richardson P."/>
        </authorList>
    </citation>
    <scope>NUCLEOTIDE SEQUENCE [LARGE SCALE GENOMIC DNA]</scope>
    <source>
        <strain>DSM 10674 / SJ95</strain>
    </source>
</reference>
<protein>
    <recommendedName>
        <fullName evidence="1">Small ribosomal subunit protein bS20</fullName>
    </recommendedName>
    <alternativeName>
        <fullName evidence="3">30S ribosomal protein S20</fullName>
    </alternativeName>
</protein>
<name>RS20_PETMO</name>
<keyword id="KW-0687">Ribonucleoprotein</keyword>
<keyword id="KW-0689">Ribosomal protein</keyword>
<keyword id="KW-0694">RNA-binding</keyword>
<keyword id="KW-0699">rRNA-binding</keyword>
<evidence type="ECO:0000255" key="1">
    <source>
        <dbReference type="HAMAP-Rule" id="MF_00500"/>
    </source>
</evidence>
<evidence type="ECO:0000256" key="2">
    <source>
        <dbReference type="SAM" id="MobiDB-lite"/>
    </source>
</evidence>
<evidence type="ECO:0000305" key="3"/>